<sequence length="604" mass="68847">MLARALLLCVALALGHAANPCCSNPCQNRGVCMSVGFDQYQCDCTRTGFYGENCSTPEFLTRIKLFLKPTPNTVHYILTHFKGVWNIVNSFPFLRNAVMKYVLVSRSHLIESPPTYNAQYGYKSWESFSNLSYYTRALPPVADGCPTPMGVKGKKELPDSKEIVEKFLLRRKFIPDPQGTNMMFAFFAQHFTHQFFKTDPKRGPAFTKGLGHGVDLSHIYGETLDRQHKLRLFKDGKMKYQIINGEVYPPTVKDTQVEMIYPPHIPEHLRFAVGQEVFGLVPGLMMYATIWLREHNRVCDVLKQEHPEWDDERLFQTSRLILIGETIKIVIEDYVQHLSGYHFKLKFDPELLFNQQFQYQNRIAAEFNTLYHWHPLLPDTFQIDDQEYNFQQFLYNNSILLEHGLTQFVESFSRQIAGRVAGGRNVPAAAQKIAKASIDQSREMKYQSLNEYRKRFRLTPYKSFEELTGEKEMAAELEALYGDIDAMELYPALLVEKPRPDAIFGETMVELGAPFSLKGLLGNPICSPDYWKPSTFGGEVGFKIINTASIQSLICNNVKGCPFTAFSVQDPQLSKAVTINASASHSGLDDVNPTVLLKERSTEL</sequence>
<proteinExistence type="evidence at transcript level"/>
<keyword id="KW-0223">Dioxygenase</keyword>
<keyword id="KW-1015">Disulfide bond</keyword>
<keyword id="KW-0256">Endoplasmic reticulum</keyword>
<keyword id="KW-0275">Fatty acid biosynthesis</keyword>
<keyword id="KW-0276">Fatty acid metabolism</keyword>
<keyword id="KW-0325">Glycoprotein</keyword>
<keyword id="KW-0349">Heme</keyword>
<keyword id="KW-0408">Iron</keyword>
<keyword id="KW-0444">Lipid biosynthesis</keyword>
<keyword id="KW-0443">Lipid metabolism</keyword>
<keyword id="KW-0472">Membrane</keyword>
<keyword id="KW-0479">Metal-binding</keyword>
<keyword id="KW-0492">Microsome</keyword>
<keyword id="KW-0539">Nucleus</keyword>
<keyword id="KW-0560">Oxidoreductase</keyword>
<keyword id="KW-0575">Peroxidase</keyword>
<keyword id="KW-0643">Prostaglandin biosynthesis</keyword>
<keyword id="KW-0644">Prostaglandin metabolism</keyword>
<keyword id="KW-1185">Reference proteome</keyword>
<keyword id="KW-0702">S-nitrosylation</keyword>
<keyword id="KW-0732">Signal</keyword>
<reference key="1">
    <citation type="journal article" date="1998" name="Endocrinology">
        <title>Molecular characterization of equine prostaglandin G/H synthase-2 and regulation of its messenger ribonucleic acid in preovulatory follicles.</title>
        <authorList>
            <person name="Boerboom D."/>
            <person name="Sirois J."/>
        </authorList>
    </citation>
    <scope>NUCLEOTIDE SEQUENCE [GENOMIC DNA / MRNA]</scope>
</reference>
<accession>O19183</accession>
<dbReference type="EC" id="1.14.99.1"/>
<dbReference type="EMBL" id="AF027335">
    <property type="protein sequence ID" value="AAC48808.1"/>
    <property type="molecule type" value="Genomic_DNA"/>
</dbReference>
<dbReference type="EMBL" id="AF027334">
    <property type="protein sequence ID" value="AAC07911.1"/>
    <property type="molecule type" value="mRNA"/>
</dbReference>
<dbReference type="RefSeq" id="NP_001075244.1">
    <property type="nucleotide sequence ID" value="NM_001081775.2"/>
</dbReference>
<dbReference type="SMR" id="O19183"/>
<dbReference type="FunCoup" id="O19183">
    <property type="interactions" value="289"/>
</dbReference>
<dbReference type="STRING" id="9796.ENSECAP00000015107"/>
<dbReference type="ChEMBL" id="CHEMBL5303566"/>
<dbReference type="PeroxiBase" id="4123">
    <property type="entry name" value="EcabPGHS02"/>
</dbReference>
<dbReference type="GlyCosmos" id="O19183">
    <property type="glycosylation" value="4 sites, No reported glycans"/>
</dbReference>
<dbReference type="PaxDb" id="9796-ENSECAP00000015107"/>
<dbReference type="GeneID" id="791253"/>
<dbReference type="KEGG" id="ecb:791253"/>
<dbReference type="CTD" id="5743"/>
<dbReference type="HOGENOM" id="CLU_022428_0_0_1"/>
<dbReference type="InParanoid" id="O19183"/>
<dbReference type="OrthoDB" id="823504at2759"/>
<dbReference type="TreeFam" id="TF329675"/>
<dbReference type="UniPathway" id="UPA00662"/>
<dbReference type="Proteomes" id="UP000002281">
    <property type="component" value="Unplaced"/>
</dbReference>
<dbReference type="GO" id="GO:0005737">
    <property type="term" value="C:cytoplasm"/>
    <property type="evidence" value="ECO:0000250"/>
    <property type="project" value="UniProtKB"/>
</dbReference>
<dbReference type="GO" id="GO:0005789">
    <property type="term" value="C:endoplasmic reticulum membrane"/>
    <property type="evidence" value="ECO:0007669"/>
    <property type="project" value="UniProtKB-SubCell"/>
</dbReference>
<dbReference type="GO" id="GO:0043005">
    <property type="term" value="C:neuron projection"/>
    <property type="evidence" value="ECO:0000318"/>
    <property type="project" value="GO_Central"/>
</dbReference>
<dbReference type="GO" id="GO:0005637">
    <property type="term" value="C:nuclear inner membrane"/>
    <property type="evidence" value="ECO:0000250"/>
    <property type="project" value="UniProtKB"/>
</dbReference>
<dbReference type="GO" id="GO:0005640">
    <property type="term" value="C:nuclear outer membrane"/>
    <property type="evidence" value="ECO:0000250"/>
    <property type="project" value="UniProtKB"/>
</dbReference>
<dbReference type="GO" id="GO:0020037">
    <property type="term" value="F:heme binding"/>
    <property type="evidence" value="ECO:0000250"/>
    <property type="project" value="UniProtKB"/>
</dbReference>
<dbReference type="GO" id="GO:0046872">
    <property type="term" value="F:metal ion binding"/>
    <property type="evidence" value="ECO:0007669"/>
    <property type="project" value="UniProtKB-KW"/>
</dbReference>
<dbReference type="GO" id="GO:0016702">
    <property type="term" value="F:oxidoreductase activity, acting on single donors with incorporation of molecular oxygen, incorporation of two atoms of oxygen"/>
    <property type="evidence" value="ECO:0000318"/>
    <property type="project" value="GO_Central"/>
</dbReference>
<dbReference type="GO" id="GO:0004601">
    <property type="term" value="F:peroxidase activity"/>
    <property type="evidence" value="ECO:0007669"/>
    <property type="project" value="UniProtKB-KW"/>
</dbReference>
<dbReference type="GO" id="GO:0004666">
    <property type="term" value="F:prostaglandin-endoperoxide synthase activity"/>
    <property type="evidence" value="ECO:0000250"/>
    <property type="project" value="UniProtKB"/>
</dbReference>
<dbReference type="GO" id="GO:0019371">
    <property type="term" value="P:cyclooxygenase pathway"/>
    <property type="evidence" value="ECO:0000250"/>
    <property type="project" value="UniProtKB"/>
</dbReference>
<dbReference type="GO" id="GO:0001516">
    <property type="term" value="P:prostaglandin biosynthetic process"/>
    <property type="evidence" value="ECO:0000250"/>
    <property type="project" value="UniProtKB"/>
</dbReference>
<dbReference type="GO" id="GO:0008217">
    <property type="term" value="P:regulation of blood pressure"/>
    <property type="evidence" value="ECO:0000250"/>
    <property type="project" value="UniProtKB"/>
</dbReference>
<dbReference type="GO" id="GO:0150077">
    <property type="term" value="P:regulation of neuroinflammatory response"/>
    <property type="evidence" value="ECO:0000250"/>
    <property type="project" value="UniProtKB"/>
</dbReference>
<dbReference type="GO" id="GO:0006979">
    <property type="term" value="P:response to oxidative stress"/>
    <property type="evidence" value="ECO:0007669"/>
    <property type="project" value="InterPro"/>
</dbReference>
<dbReference type="CDD" id="cd00054">
    <property type="entry name" value="EGF_CA"/>
    <property type="match status" value="1"/>
</dbReference>
<dbReference type="CDD" id="cd09816">
    <property type="entry name" value="prostaglandin_endoperoxide_synthase"/>
    <property type="match status" value="1"/>
</dbReference>
<dbReference type="FunFam" id="1.10.640.10:FF:000002">
    <property type="entry name" value="Prostaglandin G/H synthase 2"/>
    <property type="match status" value="1"/>
</dbReference>
<dbReference type="FunFam" id="2.10.25.10:FF:000235">
    <property type="entry name" value="Prostaglandin G/H synthase 2"/>
    <property type="match status" value="1"/>
</dbReference>
<dbReference type="Gene3D" id="1.10.640.10">
    <property type="entry name" value="Haem peroxidase domain superfamily, animal type"/>
    <property type="match status" value="1"/>
</dbReference>
<dbReference type="Gene3D" id="2.10.25.10">
    <property type="entry name" value="Laminin"/>
    <property type="match status" value="1"/>
</dbReference>
<dbReference type="InterPro" id="IPR000742">
    <property type="entry name" value="EGF-like_dom"/>
</dbReference>
<dbReference type="InterPro" id="IPR019791">
    <property type="entry name" value="Haem_peroxidase_animal"/>
</dbReference>
<dbReference type="InterPro" id="IPR010255">
    <property type="entry name" value="Haem_peroxidase_sf"/>
</dbReference>
<dbReference type="InterPro" id="IPR037120">
    <property type="entry name" value="Haem_peroxidase_sf_animal"/>
</dbReference>
<dbReference type="InterPro" id="IPR050783">
    <property type="entry name" value="Oxylipin_biosynth_metab"/>
</dbReference>
<dbReference type="PANTHER" id="PTHR11903">
    <property type="entry name" value="PROSTAGLANDIN G/H SYNTHASE"/>
    <property type="match status" value="1"/>
</dbReference>
<dbReference type="PANTHER" id="PTHR11903:SF8">
    <property type="entry name" value="PROSTAGLANDIN G_H SYNTHASE 2"/>
    <property type="match status" value="1"/>
</dbReference>
<dbReference type="Pfam" id="PF03098">
    <property type="entry name" value="An_peroxidase"/>
    <property type="match status" value="2"/>
</dbReference>
<dbReference type="Pfam" id="PF00008">
    <property type="entry name" value="EGF"/>
    <property type="match status" value="1"/>
</dbReference>
<dbReference type="PRINTS" id="PR00457">
    <property type="entry name" value="ANPEROXIDASE"/>
</dbReference>
<dbReference type="SUPFAM" id="SSF57196">
    <property type="entry name" value="EGF/Laminin"/>
    <property type="match status" value="1"/>
</dbReference>
<dbReference type="SUPFAM" id="SSF48113">
    <property type="entry name" value="Heme-dependent peroxidases"/>
    <property type="match status" value="1"/>
</dbReference>
<dbReference type="PROSITE" id="PS50026">
    <property type="entry name" value="EGF_3"/>
    <property type="match status" value="1"/>
</dbReference>
<dbReference type="PROSITE" id="PS50292">
    <property type="entry name" value="PEROXIDASE_3"/>
    <property type="match status" value="1"/>
</dbReference>
<gene>
    <name type="primary">PTGS2</name>
    <name type="synonym">COX2</name>
</gene>
<organism>
    <name type="scientific">Equus caballus</name>
    <name type="common">Horse</name>
    <dbReference type="NCBI Taxonomy" id="9796"/>
    <lineage>
        <taxon>Eukaryota</taxon>
        <taxon>Metazoa</taxon>
        <taxon>Chordata</taxon>
        <taxon>Craniata</taxon>
        <taxon>Vertebrata</taxon>
        <taxon>Euteleostomi</taxon>
        <taxon>Mammalia</taxon>
        <taxon>Eutheria</taxon>
        <taxon>Laurasiatheria</taxon>
        <taxon>Perissodactyla</taxon>
        <taxon>Equidae</taxon>
        <taxon>Equus</taxon>
    </lineage>
</organism>
<comment type="function">
    <text evidence="2 3 4">Dual cyclooxygenase and peroxidase in the biosynthesis pathway of prostanoids, a class of C20 oxylipins mainly derived from arachidonate ((5Z,8Z,11Z,14Z)-eicosatetraenoate, AA, C20:4(n-6)), with a particular role in the inflammatory response. The cyclooxygenase activity oxygenates AA to the hydroperoxy endoperoxide prostaglandin G2 (PGG2), and the peroxidase activity reduces PGG2 to the hydroxy endoperoxide prostaglandin H2 (PGH2), the precursor of all 2-series prostaglandins and thromboxanes. This complex transformation is initiated by abstraction of hydrogen at carbon 13 (with S-stereochemistry), followed by insertion of molecular O2 to form the endoperoxide bridge between carbon 9 and 11 that defines prostaglandins. The insertion of a second molecule of O2 (bis-oxygenase activity) yields a hydroperoxy group in PGG2 that is then reduced to PGH2 by two electrons. Similarly catalyzes successive cyclooxygenation and peroxidation of dihomo-gamma-linoleate (DGLA, C20:3(n-6)) and eicosapentaenoate (EPA, C20:5(n-3)) to corresponding PGH1 and PGH3, the precursors of 1- and 3-series prostaglandins. In an alternative pathway of prostanoid biosynthesis, converts 2-arachidonoyl lysophopholipids to prostanoid lysophopholipids, which are then hydrolyzed by intracellular phospholipases to release free prostanoids. Metabolizes 2-arachidonoyl glycerol yielding the glyceryl ester of PGH2, a process that can contribute to pain response. Generates lipid mediators from n-3 and n-6 polyunsaturated fatty acids (PUFAs) via a lipoxygenase-type mechanism. Oxygenates PUFAs to hydroperoxy compounds and then reduces them to corresponding alcohols. Plays a role in the generation of resolution phase interaction products (resolvins) during both sterile and infectious inflammation. Metabolizes docosahexaenoate (DHA, C22:6(n-3)) to 17R-HDHA, a precursor of the D-series resolvins (RvDs). As a component of the biosynthetic pathway of E-series resolvins (RvEs), converts eicosapentaenoate (EPA, C20:5(n-3)) primarily to 18S-HEPE that is further metabolized by ALOX5 and LTA4H to generate 18S-RvE1 and 18S-RvE2. In vascular endothelial cells, converts docosapentaenoate (DPA, C22:5(n-3)) to 13R-HDPA, a precursor for 13-series resolvins (RvTs) shown to activate macrophage phagocytosis during bacterial infection. In activated leukocytes, contributes to oxygenation of hydroxyeicosatetraenoates (HETE) to diHETES (5,15-diHETE and 5,11-diHETE). Can also use linoleate (LA, (9Z,12Z)-octadecadienoate, C18:2(n-6)) as substrate and produce hydroxyoctadecadienoates (HODEs) in a regio- and stereospecific manner, being (9R)-HODE ((9R)-hydroxy-(10E,12Z)-octadecadienoate) and (13S)-HODE ((13S)-hydroxy-(9Z,11E)-octadecadienoate) its major products (By similarity). During neuroinflammation, plays a role in neuronal secretion of specialized preresolving mediators (SPMs) 15R-lipoxin A4 that regulates phagocytic microglia (By similarity).</text>
</comment>
<comment type="catalytic activity">
    <reaction evidence="2">
        <text>(5Z,8Z,11Z,14Z)-eicosatetraenoate + AH2 + 2 O2 = prostaglandin H2 + A + H2O</text>
        <dbReference type="Rhea" id="RHEA:23728"/>
        <dbReference type="ChEBI" id="CHEBI:13193"/>
        <dbReference type="ChEBI" id="CHEBI:15377"/>
        <dbReference type="ChEBI" id="CHEBI:15379"/>
        <dbReference type="ChEBI" id="CHEBI:17499"/>
        <dbReference type="ChEBI" id="CHEBI:32395"/>
        <dbReference type="ChEBI" id="CHEBI:57405"/>
        <dbReference type="EC" id="1.14.99.1"/>
    </reaction>
    <physiologicalReaction direction="left-to-right" evidence="2">
        <dbReference type="Rhea" id="RHEA:23729"/>
    </physiologicalReaction>
</comment>
<comment type="catalytic activity">
    <reaction evidence="2">
        <text>(5Z,8Z,11Z,14Z)-eicosatetraenoate + 2 O2 = prostaglandin G2</text>
        <dbReference type="Rhea" id="RHEA:42596"/>
        <dbReference type="ChEBI" id="CHEBI:15379"/>
        <dbReference type="ChEBI" id="CHEBI:32395"/>
        <dbReference type="ChEBI" id="CHEBI:82629"/>
    </reaction>
    <physiologicalReaction direction="left-to-right" evidence="2">
        <dbReference type="Rhea" id="RHEA:42597"/>
    </physiologicalReaction>
</comment>
<comment type="catalytic activity">
    <reaction evidence="2">
        <text>prostaglandin G2 + AH2 = prostaglandin H2 + A + H2O</text>
        <dbReference type="Rhea" id="RHEA:42600"/>
        <dbReference type="ChEBI" id="CHEBI:13193"/>
        <dbReference type="ChEBI" id="CHEBI:15377"/>
        <dbReference type="ChEBI" id="CHEBI:17499"/>
        <dbReference type="ChEBI" id="CHEBI:57405"/>
        <dbReference type="ChEBI" id="CHEBI:82629"/>
    </reaction>
    <physiologicalReaction direction="left-to-right" evidence="2">
        <dbReference type="Rhea" id="RHEA:42601"/>
    </physiologicalReaction>
</comment>
<comment type="catalytic activity">
    <reaction evidence="2">
        <text>(5Z,8Z,11Z,14Z,17Z)-eicosapentaenoate + 2 O2 = prostaglandin G3</text>
        <dbReference type="Rhea" id="RHEA:50444"/>
        <dbReference type="ChEBI" id="CHEBI:15379"/>
        <dbReference type="ChEBI" id="CHEBI:58562"/>
        <dbReference type="ChEBI" id="CHEBI:133133"/>
    </reaction>
    <physiologicalReaction direction="left-to-right" evidence="2">
        <dbReference type="Rhea" id="RHEA:50445"/>
    </physiologicalReaction>
</comment>
<comment type="catalytic activity">
    <reaction evidence="2">
        <text>prostaglandin G3 + AH2 = prostaglandin H3 + A + H2O</text>
        <dbReference type="Rhea" id="RHEA:50448"/>
        <dbReference type="ChEBI" id="CHEBI:13193"/>
        <dbReference type="ChEBI" id="CHEBI:15377"/>
        <dbReference type="ChEBI" id="CHEBI:17499"/>
        <dbReference type="ChEBI" id="CHEBI:133133"/>
        <dbReference type="ChEBI" id="CHEBI:133134"/>
    </reaction>
    <physiologicalReaction direction="left-to-right" evidence="2">
        <dbReference type="Rhea" id="RHEA:50449"/>
    </physiologicalReaction>
</comment>
<comment type="catalytic activity">
    <reaction evidence="2">
        <text>(8Z,11Z,14Z)-eicosatrienoate + 2 O2 = prostaglandin G1</text>
        <dbReference type="Rhea" id="RHEA:50424"/>
        <dbReference type="ChEBI" id="CHEBI:15379"/>
        <dbReference type="ChEBI" id="CHEBI:71589"/>
        <dbReference type="ChEBI" id="CHEBI:133084"/>
    </reaction>
    <physiologicalReaction direction="left-to-right" evidence="2">
        <dbReference type="Rhea" id="RHEA:50425"/>
    </physiologicalReaction>
</comment>
<comment type="catalytic activity">
    <reaction evidence="2">
        <text>prostaglandin G1 + AH2 = prostaglandin H1 + A + H2O</text>
        <dbReference type="Rhea" id="RHEA:50432"/>
        <dbReference type="ChEBI" id="CHEBI:13193"/>
        <dbReference type="ChEBI" id="CHEBI:15377"/>
        <dbReference type="ChEBI" id="CHEBI:17499"/>
        <dbReference type="ChEBI" id="CHEBI:90793"/>
        <dbReference type="ChEBI" id="CHEBI:133084"/>
    </reaction>
    <physiologicalReaction direction="left-to-right" evidence="2">
        <dbReference type="Rhea" id="RHEA:50433"/>
    </physiologicalReaction>
</comment>
<comment type="catalytic activity">
    <reaction evidence="2">
        <text>2-(5Z,8Z,11Z,14Z)-eicosatetraenoyl-sn-glycero-3-phosphoethanolamine + 2 O2 = 2-(prostaglandin G2)-sn-glycero-3-phosphoethanolamine</text>
        <dbReference type="Rhea" id="RHEA:54204"/>
        <dbReference type="ChEBI" id="CHEBI:15379"/>
        <dbReference type="ChEBI" id="CHEBI:76091"/>
        <dbReference type="ChEBI" id="CHEBI:138098"/>
    </reaction>
    <physiologicalReaction direction="left-to-right" evidence="2">
        <dbReference type="Rhea" id="RHEA:54205"/>
    </physiologicalReaction>
</comment>
<comment type="catalytic activity">
    <reaction evidence="2">
        <text>2-(prostaglandin G2)-sn-glycero-3-phosphoethanolamine + AH2 = 2-(prostaglandin H2)-sn-glycero-3-phosphoethanolamine + A + H2O</text>
        <dbReference type="Rhea" id="RHEA:54208"/>
        <dbReference type="ChEBI" id="CHEBI:13193"/>
        <dbReference type="ChEBI" id="CHEBI:15377"/>
        <dbReference type="ChEBI" id="CHEBI:17499"/>
        <dbReference type="ChEBI" id="CHEBI:138098"/>
        <dbReference type="ChEBI" id="CHEBI:138099"/>
    </reaction>
    <physiologicalReaction direction="left-to-right" evidence="2">
        <dbReference type="Rhea" id="RHEA:54209"/>
    </physiologicalReaction>
</comment>
<comment type="catalytic activity">
    <reaction evidence="2">
        <text>2-(5Z,8Z,11Z,14Z)-eicosatetraenoyl-sn-glycero-3-phosphocholine + 2 O2 = 2-(prostaglandin G2)-sn-glycero-3-phosphocholine</text>
        <dbReference type="Rhea" id="RHEA:54212"/>
        <dbReference type="ChEBI" id="CHEBI:15379"/>
        <dbReference type="ChEBI" id="CHEBI:76079"/>
        <dbReference type="ChEBI" id="CHEBI:138100"/>
    </reaction>
    <physiologicalReaction direction="left-to-right" evidence="2">
        <dbReference type="Rhea" id="RHEA:54213"/>
    </physiologicalReaction>
</comment>
<comment type="catalytic activity">
    <reaction evidence="2">
        <text>2-(prostaglandin G2)-sn-glycero-3-phosphocholine + AH2 = 2-(prostaglandin H2)-sn-glycero-3-phosphocholine + A + H2O</text>
        <dbReference type="Rhea" id="RHEA:54216"/>
        <dbReference type="ChEBI" id="CHEBI:13193"/>
        <dbReference type="ChEBI" id="CHEBI:15377"/>
        <dbReference type="ChEBI" id="CHEBI:17499"/>
        <dbReference type="ChEBI" id="CHEBI:138100"/>
        <dbReference type="ChEBI" id="CHEBI:138101"/>
    </reaction>
    <physiologicalReaction direction="left-to-right" evidence="2">
        <dbReference type="Rhea" id="RHEA:54217"/>
    </physiologicalReaction>
</comment>
<comment type="catalytic activity">
    <reaction evidence="2">
        <text>(15S)-hydroperoxy-(5Z,8Z,11Z,13E)-eicosatetraenoate + AH2 = (15S)-hydroxy-(5Z,8Z,11Z,13E)-eicosatetraenoate + A + H2O</text>
        <dbReference type="Rhea" id="RHEA:48856"/>
        <dbReference type="ChEBI" id="CHEBI:13193"/>
        <dbReference type="ChEBI" id="CHEBI:15377"/>
        <dbReference type="ChEBI" id="CHEBI:17499"/>
        <dbReference type="ChEBI" id="CHEBI:57409"/>
        <dbReference type="ChEBI" id="CHEBI:57446"/>
    </reaction>
    <physiologicalReaction direction="left-to-right" evidence="2">
        <dbReference type="Rhea" id="RHEA:48857"/>
    </physiologicalReaction>
</comment>
<comment type="catalytic activity">
    <reaction evidence="2">
        <text>2-(5Z,8Z,11Z,14Z)-eicosatetraenoyl-sn-glycero-3-phosphocholine + AH2 + O2 = 2-[(15S)-hydroxy-(5Z,8Z,11Z,13E)-eicosatetraenoyl]-sn-glycero-3-phosphocholine + A + H2O</text>
        <dbReference type="Rhea" id="RHEA:53684"/>
        <dbReference type="ChEBI" id="CHEBI:13193"/>
        <dbReference type="ChEBI" id="CHEBI:15377"/>
        <dbReference type="ChEBI" id="CHEBI:15379"/>
        <dbReference type="ChEBI" id="CHEBI:17499"/>
        <dbReference type="ChEBI" id="CHEBI:76079"/>
        <dbReference type="ChEBI" id="CHEBI:137584"/>
    </reaction>
    <physiologicalReaction direction="left-to-right" evidence="2">
        <dbReference type="Rhea" id="RHEA:53685"/>
    </physiologicalReaction>
</comment>
<comment type="catalytic activity">
    <reaction evidence="2">
        <text>2-(5Z,8Z,11Z,14Z)-eicosatetraenoyl-sn-glycero-3-phosphocholine + AH2 + O2 = 2-[(15R)-hydroxy-(5Z,8Z,11Z,13E)-eicosatetraenoyl]-sn-glycero-3-phosphocholine + A + H2O</text>
        <dbReference type="Rhea" id="RHEA:53680"/>
        <dbReference type="ChEBI" id="CHEBI:13193"/>
        <dbReference type="ChEBI" id="CHEBI:15377"/>
        <dbReference type="ChEBI" id="CHEBI:15379"/>
        <dbReference type="ChEBI" id="CHEBI:17499"/>
        <dbReference type="ChEBI" id="CHEBI:76079"/>
        <dbReference type="ChEBI" id="CHEBI:137583"/>
    </reaction>
    <physiologicalReaction direction="left-to-right" evidence="2">
        <dbReference type="Rhea" id="RHEA:53681"/>
    </physiologicalReaction>
</comment>
<comment type="catalytic activity">
    <reaction evidence="2">
        <text>2-(5Z,8Z,11Z,14Z)-eicosatetraenoyl-sn-glycero-3-phosphocholine + AH2 + O2 = 2-[(11R)-hydroxy-(5Z,8Z,12E,14Z)-eicosatetraenoyl]-sn-glycero-3-phosphocholine + A + H2O</text>
        <dbReference type="Rhea" id="RHEA:53676"/>
        <dbReference type="ChEBI" id="CHEBI:13193"/>
        <dbReference type="ChEBI" id="CHEBI:15377"/>
        <dbReference type="ChEBI" id="CHEBI:15379"/>
        <dbReference type="ChEBI" id="CHEBI:17499"/>
        <dbReference type="ChEBI" id="CHEBI:76079"/>
        <dbReference type="ChEBI" id="CHEBI:137582"/>
    </reaction>
    <physiologicalReaction direction="left-to-right" evidence="2">
        <dbReference type="Rhea" id="RHEA:53677"/>
    </physiologicalReaction>
</comment>
<comment type="catalytic activity">
    <reaction evidence="2">
        <text>(9Z,12Z)-octadecadienoate + AH2 + O2 = 9-hydroxy-(10E,12Z)-octadecadienoate + A + H2O</text>
        <dbReference type="Rhea" id="RHEA:50864"/>
        <dbReference type="ChEBI" id="CHEBI:13193"/>
        <dbReference type="ChEBI" id="CHEBI:15377"/>
        <dbReference type="ChEBI" id="CHEBI:15379"/>
        <dbReference type="ChEBI" id="CHEBI:17499"/>
        <dbReference type="ChEBI" id="CHEBI:30245"/>
        <dbReference type="ChEBI" id="CHEBI:133820"/>
    </reaction>
    <physiologicalReaction direction="left-to-right" evidence="2">
        <dbReference type="Rhea" id="RHEA:50865"/>
    </physiologicalReaction>
</comment>
<comment type="catalytic activity">
    <reaction evidence="2">
        <text>(9Z,12Z)-octadecadienoate + AH2 + O2 = 13-hydroxy-(9Z,11E)-octadecadienoate + A + H2O</text>
        <dbReference type="Rhea" id="RHEA:50860"/>
        <dbReference type="ChEBI" id="CHEBI:13193"/>
        <dbReference type="ChEBI" id="CHEBI:15377"/>
        <dbReference type="ChEBI" id="CHEBI:15379"/>
        <dbReference type="ChEBI" id="CHEBI:17499"/>
        <dbReference type="ChEBI" id="CHEBI:30245"/>
        <dbReference type="ChEBI" id="CHEBI:133819"/>
    </reaction>
    <physiologicalReaction direction="left-to-right" evidence="2">
        <dbReference type="Rhea" id="RHEA:50861"/>
    </physiologicalReaction>
</comment>
<comment type="catalytic activity">
    <reaction evidence="2">
        <text>(5Z,8Z,11Z,14Z)-eicosatetraenoate + AH2 + O2 = (15R)-hydroxy-(5Z,8Z,11Z,13E)-eicosatetraenoate + A + H2O</text>
        <dbReference type="Rhea" id="RHEA:50856"/>
        <dbReference type="ChEBI" id="CHEBI:13193"/>
        <dbReference type="ChEBI" id="CHEBI:15377"/>
        <dbReference type="ChEBI" id="CHEBI:15379"/>
        <dbReference type="ChEBI" id="CHEBI:17499"/>
        <dbReference type="ChEBI" id="CHEBI:32395"/>
        <dbReference type="ChEBI" id="CHEBI:78837"/>
    </reaction>
    <physiologicalReaction direction="left-to-right" evidence="2">
        <dbReference type="Rhea" id="RHEA:50857"/>
    </physiologicalReaction>
</comment>
<comment type="catalytic activity">
    <reaction evidence="2">
        <text>(5Z,8Z,11Z,14Z)-eicosatetraenoate + AH2 + O2 = (11R)-hydroxy-(5Z,8Z,12E,14Z)-eicosatetraenoate + A + H2O</text>
        <dbReference type="Rhea" id="RHEA:50852"/>
        <dbReference type="ChEBI" id="CHEBI:13193"/>
        <dbReference type="ChEBI" id="CHEBI:15377"/>
        <dbReference type="ChEBI" id="CHEBI:15379"/>
        <dbReference type="ChEBI" id="CHEBI:17499"/>
        <dbReference type="ChEBI" id="CHEBI:32395"/>
        <dbReference type="ChEBI" id="CHEBI:78836"/>
    </reaction>
    <physiologicalReaction direction="left-to-right" evidence="2">
        <dbReference type="Rhea" id="RHEA:50853"/>
    </physiologicalReaction>
</comment>
<comment type="catalytic activity">
    <reaction evidence="2">
        <text>(5Z,8Z,11Z,14Z,17Z)-eicosapentaenoate + AH2 + O2 = (11R)-hydroxy-(5Z,8Z,12E,14Z,17Z)-eicosapentaenoate + A + H2O</text>
        <dbReference type="Rhea" id="RHEA:50848"/>
        <dbReference type="ChEBI" id="CHEBI:13193"/>
        <dbReference type="ChEBI" id="CHEBI:15377"/>
        <dbReference type="ChEBI" id="CHEBI:15379"/>
        <dbReference type="ChEBI" id="CHEBI:17499"/>
        <dbReference type="ChEBI" id="CHEBI:58562"/>
        <dbReference type="ChEBI" id="CHEBI:90820"/>
    </reaction>
    <physiologicalReaction direction="left-to-right" evidence="2">
        <dbReference type="Rhea" id="RHEA:50849"/>
    </physiologicalReaction>
</comment>
<comment type="catalytic activity">
    <reaction evidence="2">
        <text>(5Z,8Z,11Z,14Z,17Z)-eicosapentaenoate + AH2 + O2 = (18S)-hydroxy-(5Z,8Z,11Z,14Z,16E)-eicosapentaenoate + A + H2O</text>
        <dbReference type="Rhea" id="RHEA:50200"/>
        <dbReference type="ChEBI" id="CHEBI:13193"/>
        <dbReference type="ChEBI" id="CHEBI:15377"/>
        <dbReference type="ChEBI" id="CHEBI:15379"/>
        <dbReference type="ChEBI" id="CHEBI:17499"/>
        <dbReference type="ChEBI" id="CHEBI:58562"/>
        <dbReference type="ChEBI" id="CHEBI:132083"/>
    </reaction>
    <physiologicalReaction direction="left-to-right" evidence="2">
        <dbReference type="Rhea" id="RHEA:50201"/>
    </physiologicalReaction>
</comment>
<comment type="catalytic activity">
    <reaction evidence="2">
        <text>(5Z,8Z,11Z,14Z,17Z)-eicosapentaenoate + AH2 + O2 = (18R)-hydroxy-(5Z,8Z,11Z,14Z,16E)-eicosapentaenoate + A + H2O</text>
        <dbReference type="Rhea" id="RHEA:48836"/>
        <dbReference type="ChEBI" id="CHEBI:13193"/>
        <dbReference type="ChEBI" id="CHEBI:15377"/>
        <dbReference type="ChEBI" id="CHEBI:15379"/>
        <dbReference type="ChEBI" id="CHEBI:17499"/>
        <dbReference type="ChEBI" id="CHEBI:58562"/>
        <dbReference type="ChEBI" id="CHEBI:90818"/>
    </reaction>
    <physiologicalReaction direction="left-to-right" evidence="2">
        <dbReference type="Rhea" id="RHEA:48837"/>
    </physiologicalReaction>
</comment>
<comment type="catalytic activity">
    <reaction evidence="2">
        <text>(5Z,8Z,11Z,14Z,17Z)-eicosapentaenoate + AH2 + O2 = (15R)-hydroxy-(5Z,8Z,11Z,13E,17Z)-eicosapentaenoate + A + H2O</text>
        <dbReference type="Rhea" id="RHEA:48840"/>
        <dbReference type="ChEBI" id="CHEBI:13193"/>
        <dbReference type="ChEBI" id="CHEBI:15377"/>
        <dbReference type="ChEBI" id="CHEBI:15379"/>
        <dbReference type="ChEBI" id="CHEBI:17499"/>
        <dbReference type="ChEBI" id="CHEBI:58562"/>
        <dbReference type="ChEBI" id="CHEBI:90819"/>
    </reaction>
    <physiologicalReaction direction="left-to-right" evidence="2">
        <dbReference type="Rhea" id="RHEA:48841"/>
    </physiologicalReaction>
</comment>
<comment type="catalytic activity">
    <reaction evidence="2">
        <text>(5Z,8Z,11Z,14Z,17Z)-eicosapentaenoate + AH2 + O2 = (15S)-hydroxy-(5Z,8Z,11Z,13E,17Z)-eicosapentaenoate + A + H2O</text>
        <dbReference type="Rhea" id="RHEA:50196"/>
        <dbReference type="ChEBI" id="CHEBI:13193"/>
        <dbReference type="ChEBI" id="CHEBI:15377"/>
        <dbReference type="ChEBI" id="CHEBI:15379"/>
        <dbReference type="ChEBI" id="CHEBI:17499"/>
        <dbReference type="ChEBI" id="CHEBI:58562"/>
        <dbReference type="ChEBI" id="CHEBI:132087"/>
    </reaction>
    <physiologicalReaction direction="left-to-right" evidence="2">
        <dbReference type="Rhea" id="RHEA:50197"/>
    </physiologicalReaction>
</comment>
<comment type="catalytic activity">
    <reaction evidence="2">
        <text>(7Z,10Z,13Z,16Z,19Z)-docosapentaenoate + AH2 + O2 = 13R-hydroxy-(7Z,10Z,14E,16Z,19Z)-docosapentaenoate + A + H2O</text>
        <dbReference type="Rhea" id="RHEA:48852"/>
        <dbReference type="ChEBI" id="CHEBI:13193"/>
        <dbReference type="ChEBI" id="CHEBI:15377"/>
        <dbReference type="ChEBI" id="CHEBI:15379"/>
        <dbReference type="ChEBI" id="CHEBI:17499"/>
        <dbReference type="ChEBI" id="CHEBI:77224"/>
        <dbReference type="ChEBI" id="CHEBI:90824"/>
    </reaction>
    <physiologicalReaction direction="left-to-right" evidence="2">
        <dbReference type="Rhea" id="RHEA:48853"/>
    </physiologicalReaction>
</comment>
<comment type="catalytic activity">
    <reaction evidence="2">
        <text>(4Z,7Z,10Z,13Z,16Z,19Z)-docosahexaenoate + AH2 + O2 = 13-hydroxy-(4Z,7Z,10Z,14E,16Z,19Z)-docosahexaenoate + A + H2O</text>
        <dbReference type="Rhea" id="RHEA:48820"/>
        <dbReference type="ChEBI" id="CHEBI:13193"/>
        <dbReference type="ChEBI" id="CHEBI:15377"/>
        <dbReference type="ChEBI" id="CHEBI:15379"/>
        <dbReference type="ChEBI" id="CHEBI:17499"/>
        <dbReference type="ChEBI" id="CHEBI:77016"/>
        <dbReference type="ChEBI" id="CHEBI:90815"/>
    </reaction>
    <physiologicalReaction direction="left-to-right" evidence="2">
        <dbReference type="Rhea" id="RHEA:48821"/>
    </physiologicalReaction>
</comment>
<comment type="catalytic activity">
    <reaction evidence="2">
        <text>(5S)-hydroxy-(6E,8Z,11Z,14Z)-eicosatetraenoate + AH2 + O2 = (5S,15R)-dihydroxy-(6E,8Z,11Z,13E)-eicosatetraenoate + A + H2O</text>
        <dbReference type="Rhea" id="RHEA:48812"/>
        <dbReference type="ChEBI" id="CHEBI:13193"/>
        <dbReference type="ChEBI" id="CHEBI:15377"/>
        <dbReference type="ChEBI" id="CHEBI:15379"/>
        <dbReference type="ChEBI" id="CHEBI:17499"/>
        <dbReference type="ChEBI" id="CHEBI:90632"/>
        <dbReference type="ChEBI" id="CHEBI:90812"/>
    </reaction>
    <physiologicalReaction direction="left-to-right" evidence="2">
        <dbReference type="Rhea" id="RHEA:48813"/>
    </physiologicalReaction>
</comment>
<comment type="catalytic activity">
    <reaction evidence="2">
        <text>(4Z,7Z,10Z,13Z,16Z,19Z)-docosahexaenoate + AH2 + O2 = 17R-hydroxy-(4Z,7Z,10Z,13Z,15E,19Z)-docosahexaenoate + A + H2O</text>
        <dbReference type="Rhea" id="RHEA:48816"/>
        <dbReference type="ChEBI" id="CHEBI:13193"/>
        <dbReference type="ChEBI" id="CHEBI:15377"/>
        <dbReference type="ChEBI" id="CHEBI:15379"/>
        <dbReference type="ChEBI" id="CHEBI:17499"/>
        <dbReference type="ChEBI" id="CHEBI:77016"/>
        <dbReference type="ChEBI" id="CHEBI:90814"/>
    </reaction>
    <physiologicalReaction direction="left-to-right" evidence="2">
        <dbReference type="Rhea" id="RHEA:48817"/>
    </physiologicalReaction>
</comment>
<comment type="catalytic activity">
    <reaction evidence="2">
        <text>(5S)-hydroxy-(6E,8Z,11Z,14Z)-eicosatetraenoate + AH2 + O2 = (5S,15S)-dihydroxy-(6E,8Z,11Z,13E)-eicosatetraenoate + A + H2O</text>
        <dbReference type="Rhea" id="RHEA:48808"/>
        <dbReference type="ChEBI" id="CHEBI:13193"/>
        <dbReference type="ChEBI" id="CHEBI:15377"/>
        <dbReference type="ChEBI" id="CHEBI:15379"/>
        <dbReference type="ChEBI" id="CHEBI:17499"/>
        <dbReference type="ChEBI" id="CHEBI:90632"/>
        <dbReference type="ChEBI" id="CHEBI:90813"/>
    </reaction>
    <physiologicalReaction direction="left-to-right" evidence="2">
        <dbReference type="Rhea" id="RHEA:48809"/>
    </physiologicalReaction>
</comment>
<comment type="catalytic activity">
    <reaction evidence="2">
        <text>(5S)-hydroxy-(6E,8Z,11Z,14Z)-eicosatetraenoate + AH2 + O2 = (5S,11R)-dihydroxy-(6E,8Z,12E,14Z)-eicosatetraenoate + A + H2O</text>
        <dbReference type="Rhea" id="RHEA:48804"/>
        <dbReference type="ChEBI" id="CHEBI:13193"/>
        <dbReference type="ChEBI" id="CHEBI:15377"/>
        <dbReference type="ChEBI" id="CHEBI:15379"/>
        <dbReference type="ChEBI" id="CHEBI:17499"/>
        <dbReference type="ChEBI" id="CHEBI:90632"/>
        <dbReference type="ChEBI" id="CHEBI:90810"/>
    </reaction>
    <physiologicalReaction direction="left-to-right" evidence="2">
        <dbReference type="Rhea" id="RHEA:48805"/>
    </physiologicalReaction>
</comment>
<comment type="catalytic activity">
    <reaction evidence="2">
        <text>2-(5Z,8Z,11Z,14Z-eicosatetraenoyl)-glycerol + 2 O2 = 2-glyceryl-prostaglandin G2</text>
        <dbReference type="Rhea" id="RHEA:45288"/>
        <dbReference type="ChEBI" id="CHEBI:15379"/>
        <dbReference type="ChEBI" id="CHEBI:52392"/>
        <dbReference type="ChEBI" id="CHEBI:85165"/>
    </reaction>
    <physiologicalReaction direction="left-to-right" evidence="2">
        <dbReference type="Rhea" id="RHEA:45289"/>
    </physiologicalReaction>
</comment>
<comment type="catalytic activity">
    <reaction evidence="2">
        <text>2-glyceryl-prostaglandin G2 + AH2 = 2-glyceryl-prostaglandin H2 + A + H2O</text>
        <dbReference type="Rhea" id="RHEA:45292"/>
        <dbReference type="ChEBI" id="CHEBI:13193"/>
        <dbReference type="ChEBI" id="CHEBI:15377"/>
        <dbReference type="ChEBI" id="CHEBI:17499"/>
        <dbReference type="ChEBI" id="CHEBI:85165"/>
        <dbReference type="ChEBI" id="CHEBI:85166"/>
    </reaction>
    <physiologicalReaction direction="left-to-right" evidence="2">
        <dbReference type="Rhea" id="RHEA:45293"/>
    </physiologicalReaction>
</comment>
<comment type="catalytic activity">
    <reaction evidence="2">
        <text>(5Z,8Z,11Z,14Z)-eicosatetraenoate + O2 = (15R)-hydroperoxy-(5Z,8Z,11Z,13E)-eicosatetraenoate</text>
        <dbReference type="Rhea" id="RHEA:42284"/>
        <dbReference type="ChEBI" id="CHEBI:15379"/>
        <dbReference type="ChEBI" id="CHEBI:32395"/>
        <dbReference type="ChEBI" id="CHEBI:82626"/>
    </reaction>
    <physiologicalReaction direction="left-to-right" evidence="2">
        <dbReference type="Rhea" id="RHEA:42285"/>
    </physiologicalReaction>
</comment>
<comment type="catalytic activity">
    <reaction evidence="2">
        <text>(5Z,8Z,11Z,14Z)-eicosatetraenoate + O2 = 11R-hydroperoxy-(5Z,8Z,12E,14Z)-eicosatetraenoate</text>
        <dbReference type="Rhea" id="RHEA:42280"/>
        <dbReference type="ChEBI" id="CHEBI:15379"/>
        <dbReference type="ChEBI" id="CHEBI:32395"/>
        <dbReference type="ChEBI" id="CHEBI:82628"/>
    </reaction>
    <physiologicalReaction direction="left-to-right" evidence="2">
        <dbReference type="Rhea" id="RHEA:42281"/>
    </physiologicalReaction>
</comment>
<comment type="catalytic activity">
    <reaction evidence="3">
        <text>(9Z,12Z)-octadecadienoate + AH2 + O2 = (9R)-hydroxy-(10E,12Z)-octadecadienoate + A + H2O</text>
        <dbReference type="Rhea" id="RHEA:75447"/>
        <dbReference type="ChEBI" id="CHEBI:13193"/>
        <dbReference type="ChEBI" id="CHEBI:15377"/>
        <dbReference type="ChEBI" id="CHEBI:15379"/>
        <dbReference type="ChEBI" id="CHEBI:17499"/>
        <dbReference type="ChEBI" id="CHEBI:30245"/>
        <dbReference type="ChEBI" id="CHEBI:77895"/>
    </reaction>
    <physiologicalReaction direction="left-to-right" evidence="3">
        <dbReference type="Rhea" id="RHEA:75448"/>
    </physiologicalReaction>
</comment>
<comment type="catalytic activity">
    <reaction evidence="3">
        <text>(9Z,12Z)-octadecadienoate + AH2 + O2 = (9S)-hydroxy-(10E,12Z)-octadecadienoate + A + H2O</text>
        <dbReference type="Rhea" id="RHEA:75459"/>
        <dbReference type="ChEBI" id="CHEBI:13193"/>
        <dbReference type="ChEBI" id="CHEBI:15377"/>
        <dbReference type="ChEBI" id="CHEBI:15379"/>
        <dbReference type="ChEBI" id="CHEBI:17499"/>
        <dbReference type="ChEBI" id="CHEBI:30245"/>
        <dbReference type="ChEBI" id="CHEBI:77852"/>
    </reaction>
    <physiologicalReaction direction="left-to-right" evidence="3">
        <dbReference type="Rhea" id="RHEA:75460"/>
    </physiologicalReaction>
</comment>
<comment type="catalytic activity">
    <reaction evidence="3">
        <text>(9Z,12Z)-octadecadienoate + AH2 + O2 = (13S)-hydroxy-(9Z,11E)-octadecadienoate + A + H2O</text>
        <dbReference type="Rhea" id="RHEA:75451"/>
        <dbReference type="ChEBI" id="CHEBI:13193"/>
        <dbReference type="ChEBI" id="CHEBI:15377"/>
        <dbReference type="ChEBI" id="CHEBI:15379"/>
        <dbReference type="ChEBI" id="CHEBI:17499"/>
        <dbReference type="ChEBI" id="CHEBI:30245"/>
        <dbReference type="ChEBI" id="CHEBI:90850"/>
    </reaction>
    <physiologicalReaction direction="left-to-right" evidence="3">
        <dbReference type="Rhea" id="RHEA:75452"/>
    </physiologicalReaction>
</comment>
<comment type="catalytic activity">
    <reaction evidence="3">
        <text>(9Z,12Z)-octadecadienoate + AH2 + O2 = (13R)-hydroxy-(9Z,11E)-octadecadienoate + A + H2O</text>
        <dbReference type="Rhea" id="RHEA:75455"/>
        <dbReference type="ChEBI" id="CHEBI:13193"/>
        <dbReference type="ChEBI" id="CHEBI:15377"/>
        <dbReference type="ChEBI" id="CHEBI:15379"/>
        <dbReference type="ChEBI" id="CHEBI:17499"/>
        <dbReference type="ChEBI" id="CHEBI:30245"/>
        <dbReference type="ChEBI" id="CHEBI:136655"/>
    </reaction>
    <physiologicalReaction direction="left-to-right" evidence="3">
        <dbReference type="Rhea" id="RHEA:75456"/>
    </physiologicalReaction>
</comment>
<comment type="cofactor">
    <cofactor evidence="4">
        <name>heme b</name>
        <dbReference type="ChEBI" id="CHEBI:60344"/>
    </cofactor>
    <text evidence="4">Binds 1 heme b (iron(II)-protoporphyrin IX) group per subunit.</text>
</comment>
<comment type="pathway">
    <text evidence="2">Lipid metabolism; prostaglandin biosynthesis.</text>
</comment>
<comment type="subunit">
    <text evidence="4">Homodimer.</text>
</comment>
<comment type="subcellular location">
    <subcellularLocation>
        <location evidence="2">Microsome membrane</location>
        <topology evidence="2">Peripheral membrane protein</topology>
    </subcellularLocation>
    <subcellularLocation>
        <location evidence="2">Endoplasmic reticulum membrane</location>
        <topology evidence="2">Peripheral membrane protein</topology>
    </subcellularLocation>
    <subcellularLocation>
        <location evidence="2">Nucleus inner membrane</location>
        <topology evidence="2">Peripheral membrane protein</topology>
    </subcellularLocation>
    <subcellularLocation>
        <location evidence="2">Nucleus outer membrane</location>
        <topology evidence="2">Peripheral membrane protein</topology>
    </subcellularLocation>
    <text evidence="2">Detected on the lumenal side of the endoplasmic reticulum and nuclear envelope.</text>
</comment>
<comment type="PTM">
    <text evidence="2">S-nitrosylation by NOS2 (iNOS) activates enzyme activity. S-nitrosylation may take place on different Cys residues in addition to Cys-526.</text>
</comment>
<comment type="miscellaneous">
    <text>The conversion of arachidonate to prostaglandin H2 is a 2 step reaction: a cyclooxygenase (COX) reaction which converts arachidonate to prostaglandin G2 (PGG2) and a peroxidase reaction in which PGG2 is reduced to prostaglandin H2 (PGH2). The cyclooxygenase reaction occurs in a hydrophobic channel in the core of the enzyme. The peroxidase reaction occurs at a heme-containing active site located near the protein surface. The nonsteroidal anti-inflammatory drugs (NSAIDs) binding site corresponds to the cyclooxygenase active site.</text>
</comment>
<comment type="miscellaneous">
    <text>Conversion of arachidonate to prostaglandin H2 is mediated by 2 different isozymes: the constitutive PTGS1 and the inducible PTGS2. PTGS1 is expressed constitutively and generally produces prostanoids acutely in response to hormonal stimuli to fine-tune physiological processes requiring instantaneous, continuous regulation (e.g. hemostasis). PTGS2 is inducible and typically produces prostanoids that mediate responses to physiological stresses such as infection and inflammation.</text>
</comment>
<comment type="miscellaneous">
    <text>PTGS1 and PTGS2 are the targets of nonsteroidal anti-inflammatory drugs (NSAIDs) including aspirin and ibuprofen. Aspirin is able to produce an irreversible inactivation of the enzyme through a serine acetylation. Inhibition of the PGHSs with NSAIDs acutely reduces inflammation, pain, and fever, and long-term use of these drugs reduces fatal thrombotic events, as well as the development of colon cancer and Alzheimer's disease. PTGS2 is the principal isozyme responsible for production of inflammatory prostaglandins. New generation PTGSs inhibitors strive to be selective for PTGS2, to avoid side effects such as gastrointestinal complications and ulceration.</text>
</comment>
<comment type="similarity">
    <text evidence="8">Belongs to the prostaglandin G/H synthase family.</text>
</comment>
<evidence type="ECO:0000250" key="1"/>
<evidence type="ECO:0000250" key="2">
    <source>
        <dbReference type="UniProtKB" id="P35354"/>
    </source>
</evidence>
<evidence type="ECO:0000250" key="3">
    <source>
        <dbReference type="UniProtKB" id="P79208"/>
    </source>
</evidence>
<evidence type="ECO:0000250" key="4">
    <source>
        <dbReference type="UniProtKB" id="Q05769"/>
    </source>
</evidence>
<evidence type="ECO:0000255" key="5"/>
<evidence type="ECO:0000255" key="6">
    <source>
        <dbReference type="PROSITE-ProRule" id="PRU00076"/>
    </source>
</evidence>
<evidence type="ECO:0000255" key="7">
    <source>
        <dbReference type="PROSITE-ProRule" id="PRU00298"/>
    </source>
</evidence>
<evidence type="ECO:0000305" key="8"/>
<name>PGH2_HORSE</name>
<feature type="signal peptide" evidence="1">
    <location>
        <begin position="1"/>
        <end position="17"/>
    </location>
</feature>
<feature type="chain" id="PRO_0000023874" description="Prostaglandin G/H synthase 2">
    <location>
        <begin position="18"/>
        <end position="604"/>
    </location>
</feature>
<feature type="domain" description="EGF-like" evidence="6">
    <location>
        <begin position="18"/>
        <end position="55"/>
    </location>
</feature>
<feature type="active site" description="Proton acceptor" evidence="7">
    <location>
        <position position="193"/>
    </location>
</feature>
<feature type="active site" description="For cyclooxygenase activity" evidence="4">
    <location>
        <position position="371"/>
    </location>
</feature>
<feature type="binding site" evidence="4">
    <location>
        <position position="106"/>
    </location>
    <ligand>
        <name>substrate</name>
    </ligand>
</feature>
<feature type="binding site" evidence="4">
    <location>
        <position position="341"/>
    </location>
    <ligand>
        <name>substrate</name>
    </ligand>
</feature>
<feature type="binding site" description="axial binding residue" evidence="7">
    <location>
        <position position="374"/>
    </location>
    <ligand>
        <name>heme b</name>
        <dbReference type="ChEBI" id="CHEBI:60344"/>
    </ligand>
    <ligandPart>
        <name>Fe</name>
        <dbReference type="ChEBI" id="CHEBI:18248"/>
    </ligandPart>
</feature>
<feature type="site" description="Aspirin-acetylated serine" evidence="2">
    <location>
        <position position="516"/>
    </location>
</feature>
<feature type="modified residue" description="S-nitrosocysteine" evidence="2">
    <location>
        <position position="526"/>
    </location>
</feature>
<feature type="glycosylation site" description="N-linked (GlcNAc...) asparagine" evidence="5">
    <location>
        <position position="53"/>
    </location>
</feature>
<feature type="glycosylation site" description="N-linked (GlcNAc...) asparagine" evidence="5">
    <location>
        <position position="130"/>
    </location>
</feature>
<feature type="glycosylation site" description="N-linked (GlcNAc...) asparagine" evidence="5">
    <location>
        <position position="396"/>
    </location>
</feature>
<feature type="glycosylation site" description="N-linked (GlcNAc...) asparagine" evidence="5">
    <location>
        <position position="580"/>
    </location>
</feature>
<feature type="disulfide bond" evidence="4">
    <location>
        <begin position="21"/>
        <end position="32"/>
    </location>
</feature>
<feature type="disulfide bond" evidence="4">
    <location>
        <begin position="22"/>
        <end position="145"/>
    </location>
</feature>
<feature type="disulfide bond" evidence="4">
    <location>
        <begin position="26"/>
        <end position="42"/>
    </location>
</feature>
<feature type="disulfide bond" evidence="4">
    <location>
        <begin position="44"/>
        <end position="54"/>
    </location>
</feature>
<feature type="disulfide bond" evidence="4">
    <location>
        <begin position="555"/>
        <end position="561"/>
    </location>
</feature>
<protein>
    <recommendedName>
        <fullName>Prostaglandin G/H synthase 2</fullName>
        <ecNumber>1.14.99.1</ecNumber>
    </recommendedName>
    <alternativeName>
        <fullName>Cyclooxygenase-2</fullName>
        <shortName>COX-2</shortName>
    </alternativeName>
    <alternativeName>
        <fullName>PHS II</fullName>
    </alternativeName>
    <alternativeName>
        <fullName>Prostaglandin H2 synthase 2</fullName>
        <shortName>PGH synthase 2</shortName>
        <shortName>PGHS-2</shortName>
    </alternativeName>
    <alternativeName>
        <fullName>Prostaglandin-endoperoxide synthase 2</fullName>
    </alternativeName>
</protein>